<reference key="1">
    <citation type="journal article" date="2014" name="Sci. Rep.">
        <title>High-yield novel leech hyaluronidase to expedite the preparation of specific hyaluronan oligomers.</title>
        <authorList>
            <person name="Jin P."/>
            <person name="Kang Z."/>
            <person name="Zhang N."/>
            <person name="Du G."/>
            <person name="Chen J."/>
        </authorList>
    </citation>
    <scope>NUCLEOTIDE SEQUENCE [MRNA]</scope>
    <scope>FUNCTION</scope>
    <scope>CATALYTIC ACTIVITY</scope>
    <scope>BIOPHYSICOCHEMICAL PROPERTIES</scope>
    <scope>ACTIVITY REGULATION</scope>
    <source>
        <tissue>Head</tissue>
    </source>
</reference>
<protein>
    <recommendedName>
        <fullName evidence="4">Hyaluronoglucuronidase</fullName>
        <shortName evidence="3">LHyal</shortName>
        <ecNumber evidence="2">3.2.1.36</ecNumber>
    </recommendedName>
    <alternativeName>
        <fullName evidence="3">Hyaluronate 3-glycanohydrolase</fullName>
    </alternativeName>
</protein>
<accession>X4Y2L4</accession>
<sequence length="489" mass="55090">MKEIAVTIDDKNVIASVSESFHGVAFDASLFSPKGLWSFVDITSPKLFKLLEGLSPGYFRVGGTFANWLFFDLDENNKWKDYWAFKDKTPETATITRRWLFRKQNNLKKETFDDLVKLTKGSKMRLLFDLNAEVRTGYEIGKKMTSTWDSSEAEKLFKYCVSKGYGDNIDWELGNEPDHTSAHNLTEKQVGEDFKALHKVLEKYPTLNKGSLVGPDVGWMGVSYVKGLADGAGDHVTAFTLHQYYFDGNTSDVSTYLDATYFKKLQQLFDKVKDVLKNSPHKDKPLWLGETSSGYNSGTKDVSDRYVSGFLTLDKLGLSAANNVKVVIRQTIYNGYYGLLDKNTLEPNPDYWLMHVHNSLVGNTVFKVDVSDPTNKARVYAQCTKTNSKHTQSRYYKGSLTIFALNVGDEDVTLKIDQYSGKKIYSYILTPEGGQLTSQKVLLNGKELKLVSDQLPELNADESKTSFTLSPKTFGFFVVSDANVEACKK</sequence>
<dbReference type="EC" id="3.2.1.36" evidence="2"/>
<dbReference type="EMBL" id="KJ026763">
    <property type="protein sequence ID" value="AHV78514.1"/>
    <property type="molecule type" value="mRNA"/>
</dbReference>
<dbReference type="PDB" id="7EYO">
    <property type="method" value="X-ray"/>
    <property type="resolution" value="1.85 A"/>
    <property type="chains" value="A=1-489"/>
</dbReference>
<dbReference type="PDBsum" id="7EYO"/>
<dbReference type="SMR" id="X4Y2L4"/>
<dbReference type="BRENDA" id="3.2.1.36">
    <property type="organism ID" value="16673"/>
</dbReference>
<dbReference type="GO" id="GO:0031012">
    <property type="term" value="C:extracellular matrix"/>
    <property type="evidence" value="ECO:0007669"/>
    <property type="project" value="TreeGrafter"/>
</dbReference>
<dbReference type="GO" id="GO:0005615">
    <property type="term" value="C:extracellular space"/>
    <property type="evidence" value="ECO:0007669"/>
    <property type="project" value="TreeGrafter"/>
</dbReference>
<dbReference type="GO" id="GO:0016020">
    <property type="term" value="C:membrane"/>
    <property type="evidence" value="ECO:0007669"/>
    <property type="project" value="InterPro"/>
</dbReference>
<dbReference type="GO" id="GO:0033906">
    <property type="term" value="F:hyaluronoglucuronidase activity"/>
    <property type="evidence" value="ECO:0000314"/>
    <property type="project" value="UniProtKB"/>
</dbReference>
<dbReference type="GO" id="GO:0016740">
    <property type="term" value="F:transferase activity"/>
    <property type="evidence" value="ECO:0007669"/>
    <property type="project" value="UniProtKB-KW"/>
</dbReference>
<dbReference type="GO" id="GO:0030214">
    <property type="term" value="P:hyaluronan catabolic process"/>
    <property type="evidence" value="ECO:0000314"/>
    <property type="project" value="UniProtKB"/>
</dbReference>
<dbReference type="FunFam" id="3.20.20.80:FF:000024">
    <property type="entry name" value="Heparanase 2"/>
    <property type="match status" value="1"/>
</dbReference>
<dbReference type="Gene3D" id="3.20.20.80">
    <property type="entry name" value="Glycosidases"/>
    <property type="match status" value="1"/>
</dbReference>
<dbReference type="InterPro" id="IPR005199">
    <property type="entry name" value="Glyco_hydro_79"/>
</dbReference>
<dbReference type="InterPro" id="IPR017853">
    <property type="entry name" value="Glycoside_hydrolase_SF"/>
</dbReference>
<dbReference type="PANTHER" id="PTHR46145">
    <property type="entry name" value="HEPARANASE"/>
    <property type="match status" value="1"/>
</dbReference>
<dbReference type="PANTHER" id="PTHR46145:SF4">
    <property type="entry name" value="HEPARANASE"/>
    <property type="match status" value="1"/>
</dbReference>
<dbReference type="Pfam" id="PF03662">
    <property type="entry name" value="Glyco_hydro_79n"/>
    <property type="match status" value="1"/>
</dbReference>
<dbReference type="SUPFAM" id="SSF51445">
    <property type="entry name" value="(Trans)glycosidases"/>
    <property type="match status" value="1"/>
</dbReference>
<evidence type="ECO:0000255" key="1"/>
<evidence type="ECO:0000269" key="2">
    <source>
    </source>
</evidence>
<evidence type="ECO:0000303" key="3">
    <source>
    </source>
</evidence>
<evidence type="ECO:0000305" key="4"/>
<evidence type="ECO:0007829" key="5">
    <source>
        <dbReference type="PDB" id="7EYO"/>
    </source>
</evidence>
<proteinExistence type="evidence at protein level"/>
<comment type="function">
    <text evidence="2">Hyaluronidase that mediates hydrolysis of (1-&gt;3)-linkages between beta-D-glucuronate and N-acetyl-D-glucosamine residues in hyaluronate. Very specific to hyaluronate: not able to hydrolyze chitin, heparin or chondroitin sulfate.</text>
</comment>
<comment type="catalytic activity">
    <reaction evidence="2">
        <text>Random hydrolysis of (1-&gt;3)-linkages between beta-D-glucuronate and N-acetyl-D-glucosamine residues in hyaluronate.</text>
        <dbReference type="EC" id="3.2.1.36"/>
    </reaction>
</comment>
<comment type="activity regulation">
    <text evidence="2">Hyaluronidase activity is inhibited by Mn(2+), Cu(2+) and Fe(3+).</text>
</comment>
<comment type="biophysicochemical properties">
    <phDependence>
        <text evidence="2">Optimum pH is 6.5.</text>
    </phDependence>
    <temperatureDependence>
        <text evidence="2">Optimum temperature is 45 degrees Celsius.</text>
    </temperatureDependence>
</comment>
<comment type="similarity">
    <text evidence="4">Belongs to the glycosyl hydrolase 79 family.</text>
</comment>
<name>LHYAL_HIRNI</name>
<keyword id="KW-0002">3D-structure</keyword>
<keyword id="KW-0326">Glycosidase</keyword>
<keyword id="KW-0378">Hydrolase</keyword>
<keyword id="KW-0808">Transferase</keyword>
<feature type="chain" id="PRO_0000440625" description="Hyaluronoglucuronidase">
    <location>
        <begin position="1"/>
        <end position="489"/>
    </location>
</feature>
<feature type="active site" description="Proton donor" evidence="1">
    <location>
        <position position="176"/>
    </location>
</feature>
<feature type="active site" description="Nucleophile" evidence="1">
    <location>
        <position position="290"/>
    </location>
</feature>
<feature type="strand" evidence="5">
    <location>
        <begin position="4"/>
        <end position="9"/>
    </location>
</feature>
<feature type="strand" evidence="5">
    <location>
        <begin position="22"/>
        <end position="27"/>
    </location>
</feature>
<feature type="helix" evidence="5">
    <location>
        <begin position="28"/>
        <end position="30"/>
    </location>
</feature>
<feature type="helix" evidence="5">
    <location>
        <begin position="45"/>
        <end position="52"/>
    </location>
</feature>
<feature type="strand" evidence="5">
    <location>
        <begin position="56"/>
        <end position="63"/>
    </location>
</feature>
<feature type="helix" evidence="5">
    <location>
        <begin position="64"/>
        <end position="68"/>
    </location>
</feature>
<feature type="strand" evidence="5">
    <location>
        <begin position="69"/>
        <end position="71"/>
    </location>
</feature>
<feature type="turn" evidence="5">
    <location>
        <begin position="78"/>
        <end position="81"/>
    </location>
</feature>
<feature type="helix" evidence="5">
    <location>
        <begin position="83"/>
        <end position="85"/>
    </location>
</feature>
<feature type="turn" evidence="5">
    <location>
        <begin position="90"/>
        <end position="94"/>
    </location>
</feature>
<feature type="strand" evidence="5">
    <location>
        <begin position="95"/>
        <end position="98"/>
    </location>
</feature>
<feature type="strand" evidence="5">
    <location>
        <begin position="105"/>
        <end position="107"/>
    </location>
</feature>
<feature type="helix" evidence="5">
    <location>
        <begin position="109"/>
        <end position="120"/>
    </location>
</feature>
<feature type="turn" evidence="5">
    <location>
        <begin position="121"/>
        <end position="123"/>
    </location>
</feature>
<feature type="strand" evidence="5">
    <location>
        <begin position="124"/>
        <end position="130"/>
    </location>
</feature>
<feature type="strand" evidence="5">
    <location>
        <begin position="135"/>
        <end position="137"/>
    </location>
</feature>
<feature type="turn" evidence="5">
    <location>
        <begin position="140"/>
        <end position="142"/>
    </location>
</feature>
<feature type="helix" evidence="5">
    <location>
        <begin position="151"/>
        <end position="162"/>
    </location>
</feature>
<feature type="strand" evidence="5">
    <location>
        <begin position="169"/>
        <end position="173"/>
    </location>
</feature>
<feature type="turn" evidence="5">
    <location>
        <begin position="177"/>
        <end position="179"/>
    </location>
</feature>
<feature type="helix" evidence="5">
    <location>
        <begin position="187"/>
        <end position="201"/>
    </location>
</feature>
<feature type="helix" evidence="5">
    <location>
        <begin position="205"/>
        <end position="207"/>
    </location>
</feature>
<feature type="strand" evidence="5">
    <location>
        <begin position="208"/>
        <end position="210"/>
    </location>
</feature>
<feature type="strand" evidence="5">
    <location>
        <begin position="212"/>
        <end position="217"/>
    </location>
</feature>
<feature type="helix" evidence="5">
    <location>
        <begin position="219"/>
        <end position="222"/>
    </location>
</feature>
<feature type="helix" evidence="5">
    <location>
        <begin position="223"/>
        <end position="232"/>
    </location>
</feature>
<feature type="helix" evidence="5">
    <location>
        <begin position="233"/>
        <end position="235"/>
    </location>
</feature>
<feature type="strand" evidence="5">
    <location>
        <begin position="237"/>
        <end position="243"/>
    </location>
</feature>
<feature type="strand" evidence="5">
    <location>
        <begin position="245"/>
        <end position="247"/>
    </location>
</feature>
<feature type="helix" evidence="5">
    <location>
        <begin position="248"/>
        <end position="250"/>
    </location>
</feature>
<feature type="helix" evidence="5">
    <location>
        <begin position="255"/>
        <end position="257"/>
    </location>
</feature>
<feature type="helix" evidence="5">
    <location>
        <begin position="259"/>
        <end position="262"/>
    </location>
</feature>
<feature type="helix" evidence="5">
    <location>
        <begin position="263"/>
        <end position="275"/>
    </location>
</feature>
<feature type="turn" evidence="5">
    <location>
        <begin position="276"/>
        <end position="278"/>
    </location>
</feature>
<feature type="turn" evidence="5">
    <location>
        <begin position="280"/>
        <end position="283"/>
    </location>
</feature>
<feature type="strand" evidence="5">
    <location>
        <begin position="286"/>
        <end position="291"/>
    </location>
</feature>
<feature type="strand" evidence="5">
    <location>
        <begin position="293"/>
        <end position="295"/>
    </location>
</feature>
<feature type="turn" evidence="5">
    <location>
        <begin position="300"/>
        <end position="304"/>
    </location>
</feature>
<feature type="helix" evidence="5">
    <location>
        <begin position="306"/>
        <end position="308"/>
    </location>
</feature>
<feature type="helix" evidence="5">
    <location>
        <begin position="309"/>
        <end position="321"/>
    </location>
</feature>
<feature type="strand" evidence="5">
    <location>
        <begin position="324"/>
        <end position="330"/>
    </location>
</feature>
<feature type="strand" evidence="5">
    <location>
        <begin position="332"/>
        <end position="337"/>
    </location>
</feature>
<feature type="turn" evidence="5">
    <location>
        <begin position="342"/>
        <end position="344"/>
    </location>
</feature>
<feature type="helix" evidence="5">
    <location>
        <begin position="349"/>
        <end position="360"/>
    </location>
</feature>
<feature type="strand" evidence="5">
    <location>
        <begin position="361"/>
        <end position="370"/>
    </location>
</feature>
<feature type="strand" evidence="5">
    <location>
        <begin position="377"/>
        <end position="384"/>
    </location>
</feature>
<feature type="strand" evidence="5">
    <location>
        <begin position="386"/>
        <end position="388"/>
    </location>
</feature>
<feature type="turn" evidence="5">
    <location>
        <begin position="389"/>
        <end position="394"/>
    </location>
</feature>
<feature type="strand" evidence="5">
    <location>
        <begin position="400"/>
        <end position="406"/>
    </location>
</feature>
<feature type="strand" evidence="5">
    <location>
        <begin position="408"/>
        <end position="410"/>
    </location>
</feature>
<feature type="strand" evidence="5">
    <location>
        <begin position="412"/>
        <end position="415"/>
    </location>
</feature>
<feature type="helix" evidence="5">
    <location>
        <begin position="417"/>
        <end position="419"/>
    </location>
</feature>
<feature type="strand" evidence="5">
    <location>
        <begin position="424"/>
        <end position="431"/>
    </location>
</feature>
<feature type="helix" evidence="5">
    <location>
        <begin position="432"/>
        <end position="434"/>
    </location>
</feature>
<feature type="strand" evidence="5">
    <location>
        <begin position="441"/>
        <end position="443"/>
    </location>
</feature>
<feature type="strand" evidence="5">
    <location>
        <begin position="451"/>
        <end position="453"/>
    </location>
</feature>
<feature type="strand" evidence="5">
    <location>
        <begin position="465"/>
        <end position="469"/>
    </location>
</feature>
<feature type="strand" evidence="5">
    <location>
        <begin position="473"/>
        <end position="479"/>
    </location>
</feature>
<feature type="helix" evidence="5">
    <location>
        <begin position="485"/>
        <end position="487"/>
    </location>
</feature>
<organism>
    <name type="scientific">Hirudo nipponia</name>
    <name type="common">Korean blood-sucking leech</name>
    <dbReference type="NCBI Taxonomy" id="42736"/>
    <lineage>
        <taxon>Eukaryota</taxon>
        <taxon>Metazoa</taxon>
        <taxon>Spiralia</taxon>
        <taxon>Lophotrochozoa</taxon>
        <taxon>Annelida</taxon>
        <taxon>Clitellata</taxon>
        <taxon>Hirudinea</taxon>
        <taxon>Hirudinida</taxon>
        <taxon>Hirudiniformes</taxon>
        <taxon>Hirudinidae</taxon>
        <taxon>Hirudo</taxon>
    </lineage>
</organism>